<gene>
    <name evidence="1" type="primary">glmM</name>
    <name type="ordered locus">ETA_03430</name>
</gene>
<protein>
    <recommendedName>
        <fullName evidence="1">Phosphoglucosamine mutase</fullName>
        <ecNumber evidence="1">5.4.2.10</ecNumber>
    </recommendedName>
</protein>
<proteinExistence type="inferred from homology"/>
<organism>
    <name type="scientific">Erwinia tasmaniensis (strain DSM 17950 / CFBP 7177 / CIP 109463 / NCPPB 4357 / Et1/99)</name>
    <dbReference type="NCBI Taxonomy" id="465817"/>
    <lineage>
        <taxon>Bacteria</taxon>
        <taxon>Pseudomonadati</taxon>
        <taxon>Pseudomonadota</taxon>
        <taxon>Gammaproteobacteria</taxon>
        <taxon>Enterobacterales</taxon>
        <taxon>Erwiniaceae</taxon>
        <taxon>Erwinia</taxon>
    </lineage>
</organism>
<feature type="chain" id="PRO_1000201089" description="Phosphoglucosamine mutase">
    <location>
        <begin position="1"/>
        <end position="444"/>
    </location>
</feature>
<feature type="active site" description="Phosphoserine intermediate" evidence="1">
    <location>
        <position position="102"/>
    </location>
</feature>
<feature type="binding site" description="via phosphate group" evidence="1">
    <location>
        <position position="102"/>
    </location>
    <ligand>
        <name>Mg(2+)</name>
        <dbReference type="ChEBI" id="CHEBI:18420"/>
    </ligand>
</feature>
<feature type="binding site" evidence="1">
    <location>
        <position position="241"/>
    </location>
    <ligand>
        <name>Mg(2+)</name>
        <dbReference type="ChEBI" id="CHEBI:18420"/>
    </ligand>
</feature>
<feature type="binding site" evidence="1">
    <location>
        <position position="243"/>
    </location>
    <ligand>
        <name>Mg(2+)</name>
        <dbReference type="ChEBI" id="CHEBI:18420"/>
    </ligand>
</feature>
<feature type="binding site" evidence="1">
    <location>
        <position position="245"/>
    </location>
    <ligand>
        <name>Mg(2+)</name>
        <dbReference type="ChEBI" id="CHEBI:18420"/>
    </ligand>
</feature>
<feature type="modified residue" description="Phosphoserine" evidence="1">
    <location>
        <position position="102"/>
    </location>
</feature>
<accession>B2VGT8</accession>
<evidence type="ECO:0000255" key="1">
    <source>
        <dbReference type="HAMAP-Rule" id="MF_01554"/>
    </source>
</evidence>
<sequence length="444" mass="47407">MSERKYFGTDGIRGKVGESPITPDFVLKLGFAAGKVLARHGSKQIIIGKDTRISGYMLESALEAGLAAAGLSAAFTGPMPTPAVAYLTRTFRAEAGIVISASHNPFDDNGIKFFSTEGTKLPDDVEAAIEAEMEKPITCVESAALGRASRIVDAAGRYIEFCKGTFPSQLSLNGLKIVVDCANGATYHIAPNVLRELGATVISIGVQPDGMNINKECGATDLRLLQERVLAEKADVGLAYDGDGDRIMMVDHLGHKVDGDQILYLIAREGLRQGELRGGVVGTLMSNMGLELALKQLGIPFARAKVGDRYVLEKLKEKGWRLGAENSGHVILLDKTTTGDGIVAGLQVLTAMVRNHMSLHDLCSGMKLLPQILVNVRFSGSSDPLEDARVKAVTAEAEIELKGRGRVLLRKSGTEPLIRVMVEGEDEALVSTLANRIADAVKAV</sequence>
<comment type="function">
    <text evidence="1">Catalyzes the conversion of glucosamine-6-phosphate to glucosamine-1-phosphate.</text>
</comment>
<comment type="catalytic activity">
    <reaction evidence="1">
        <text>alpha-D-glucosamine 1-phosphate = D-glucosamine 6-phosphate</text>
        <dbReference type="Rhea" id="RHEA:23424"/>
        <dbReference type="ChEBI" id="CHEBI:58516"/>
        <dbReference type="ChEBI" id="CHEBI:58725"/>
        <dbReference type="EC" id="5.4.2.10"/>
    </reaction>
</comment>
<comment type="cofactor">
    <cofactor evidence="1">
        <name>Mg(2+)</name>
        <dbReference type="ChEBI" id="CHEBI:18420"/>
    </cofactor>
    <text evidence="1">Binds 1 Mg(2+) ion per subunit.</text>
</comment>
<comment type="PTM">
    <text evidence="1">Activated by phosphorylation.</text>
</comment>
<comment type="similarity">
    <text evidence="1">Belongs to the phosphohexose mutase family.</text>
</comment>
<name>GLMM_ERWT9</name>
<dbReference type="EC" id="5.4.2.10" evidence="1"/>
<dbReference type="EMBL" id="CU468135">
    <property type="protein sequence ID" value="CAO95389.1"/>
    <property type="molecule type" value="Genomic_DNA"/>
</dbReference>
<dbReference type="RefSeq" id="WP_012440104.1">
    <property type="nucleotide sequence ID" value="NC_010694.1"/>
</dbReference>
<dbReference type="SMR" id="B2VGT8"/>
<dbReference type="STRING" id="465817.ETA_03430"/>
<dbReference type="KEGG" id="eta:ETA_03430"/>
<dbReference type="eggNOG" id="COG1109">
    <property type="taxonomic scope" value="Bacteria"/>
</dbReference>
<dbReference type="HOGENOM" id="CLU_016950_7_0_6"/>
<dbReference type="OrthoDB" id="9803322at2"/>
<dbReference type="Proteomes" id="UP000001726">
    <property type="component" value="Chromosome"/>
</dbReference>
<dbReference type="GO" id="GO:0005829">
    <property type="term" value="C:cytosol"/>
    <property type="evidence" value="ECO:0007669"/>
    <property type="project" value="TreeGrafter"/>
</dbReference>
<dbReference type="GO" id="GO:0000287">
    <property type="term" value="F:magnesium ion binding"/>
    <property type="evidence" value="ECO:0007669"/>
    <property type="project" value="UniProtKB-UniRule"/>
</dbReference>
<dbReference type="GO" id="GO:0008966">
    <property type="term" value="F:phosphoglucosamine mutase activity"/>
    <property type="evidence" value="ECO:0007669"/>
    <property type="project" value="UniProtKB-UniRule"/>
</dbReference>
<dbReference type="GO" id="GO:0004615">
    <property type="term" value="F:phosphomannomutase activity"/>
    <property type="evidence" value="ECO:0007669"/>
    <property type="project" value="TreeGrafter"/>
</dbReference>
<dbReference type="GO" id="GO:0005975">
    <property type="term" value="P:carbohydrate metabolic process"/>
    <property type="evidence" value="ECO:0007669"/>
    <property type="project" value="InterPro"/>
</dbReference>
<dbReference type="GO" id="GO:0009252">
    <property type="term" value="P:peptidoglycan biosynthetic process"/>
    <property type="evidence" value="ECO:0007669"/>
    <property type="project" value="TreeGrafter"/>
</dbReference>
<dbReference type="GO" id="GO:0006048">
    <property type="term" value="P:UDP-N-acetylglucosamine biosynthetic process"/>
    <property type="evidence" value="ECO:0007669"/>
    <property type="project" value="TreeGrafter"/>
</dbReference>
<dbReference type="CDD" id="cd05802">
    <property type="entry name" value="GlmM"/>
    <property type="match status" value="1"/>
</dbReference>
<dbReference type="FunFam" id="3.30.310.50:FF:000001">
    <property type="entry name" value="Phosphoglucosamine mutase"/>
    <property type="match status" value="1"/>
</dbReference>
<dbReference type="FunFam" id="3.40.120.10:FF:000001">
    <property type="entry name" value="Phosphoglucosamine mutase"/>
    <property type="match status" value="1"/>
</dbReference>
<dbReference type="FunFam" id="3.40.120.10:FF:000002">
    <property type="entry name" value="Phosphoglucosamine mutase"/>
    <property type="match status" value="1"/>
</dbReference>
<dbReference type="Gene3D" id="3.40.120.10">
    <property type="entry name" value="Alpha-D-Glucose-1,6-Bisphosphate, subunit A, domain 3"/>
    <property type="match status" value="3"/>
</dbReference>
<dbReference type="Gene3D" id="3.30.310.50">
    <property type="entry name" value="Alpha-D-phosphohexomutase, C-terminal domain"/>
    <property type="match status" value="1"/>
</dbReference>
<dbReference type="HAMAP" id="MF_01554_B">
    <property type="entry name" value="GlmM_B"/>
    <property type="match status" value="1"/>
</dbReference>
<dbReference type="InterPro" id="IPR005844">
    <property type="entry name" value="A-D-PHexomutase_a/b/a-I"/>
</dbReference>
<dbReference type="InterPro" id="IPR016055">
    <property type="entry name" value="A-D-PHexomutase_a/b/a-I/II/III"/>
</dbReference>
<dbReference type="InterPro" id="IPR005845">
    <property type="entry name" value="A-D-PHexomutase_a/b/a-II"/>
</dbReference>
<dbReference type="InterPro" id="IPR005846">
    <property type="entry name" value="A-D-PHexomutase_a/b/a-III"/>
</dbReference>
<dbReference type="InterPro" id="IPR005843">
    <property type="entry name" value="A-D-PHexomutase_C"/>
</dbReference>
<dbReference type="InterPro" id="IPR036900">
    <property type="entry name" value="A-D-PHexomutase_C_sf"/>
</dbReference>
<dbReference type="InterPro" id="IPR016066">
    <property type="entry name" value="A-D-PHexomutase_CS"/>
</dbReference>
<dbReference type="InterPro" id="IPR005841">
    <property type="entry name" value="Alpha-D-phosphohexomutase_SF"/>
</dbReference>
<dbReference type="InterPro" id="IPR006352">
    <property type="entry name" value="GlmM_bact"/>
</dbReference>
<dbReference type="InterPro" id="IPR050060">
    <property type="entry name" value="Phosphoglucosamine_mutase"/>
</dbReference>
<dbReference type="NCBIfam" id="TIGR01455">
    <property type="entry name" value="glmM"/>
    <property type="match status" value="1"/>
</dbReference>
<dbReference type="NCBIfam" id="NF008139">
    <property type="entry name" value="PRK10887.1"/>
    <property type="match status" value="1"/>
</dbReference>
<dbReference type="PANTHER" id="PTHR42946:SF1">
    <property type="entry name" value="PHOSPHOGLUCOMUTASE (ALPHA-D-GLUCOSE-1,6-BISPHOSPHATE-DEPENDENT)"/>
    <property type="match status" value="1"/>
</dbReference>
<dbReference type="PANTHER" id="PTHR42946">
    <property type="entry name" value="PHOSPHOHEXOSE MUTASE"/>
    <property type="match status" value="1"/>
</dbReference>
<dbReference type="Pfam" id="PF02878">
    <property type="entry name" value="PGM_PMM_I"/>
    <property type="match status" value="1"/>
</dbReference>
<dbReference type="Pfam" id="PF02879">
    <property type="entry name" value="PGM_PMM_II"/>
    <property type="match status" value="1"/>
</dbReference>
<dbReference type="Pfam" id="PF02880">
    <property type="entry name" value="PGM_PMM_III"/>
    <property type="match status" value="1"/>
</dbReference>
<dbReference type="Pfam" id="PF00408">
    <property type="entry name" value="PGM_PMM_IV"/>
    <property type="match status" value="1"/>
</dbReference>
<dbReference type="PRINTS" id="PR00509">
    <property type="entry name" value="PGMPMM"/>
</dbReference>
<dbReference type="SUPFAM" id="SSF55957">
    <property type="entry name" value="Phosphoglucomutase, C-terminal domain"/>
    <property type="match status" value="1"/>
</dbReference>
<dbReference type="SUPFAM" id="SSF53738">
    <property type="entry name" value="Phosphoglucomutase, first 3 domains"/>
    <property type="match status" value="3"/>
</dbReference>
<dbReference type="PROSITE" id="PS00710">
    <property type="entry name" value="PGM_PMM"/>
    <property type="match status" value="1"/>
</dbReference>
<keyword id="KW-0413">Isomerase</keyword>
<keyword id="KW-0460">Magnesium</keyword>
<keyword id="KW-0479">Metal-binding</keyword>
<keyword id="KW-0597">Phosphoprotein</keyword>
<keyword id="KW-1185">Reference proteome</keyword>
<reference key="1">
    <citation type="journal article" date="2008" name="Environ. Microbiol.">
        <title>The genome of Erwinia tasmaniensis strain Et1/99, a non-pathogenic bacterium in the genus Erwinia.</title>
        <authorList>
            <person name="Kube M."/>
            <person name="Migdoll A.M."/>
            <person name="Mueller I."/>
            <person name="Kuhl H."/>
            <person name="Beck A."/>
            <person name="Reinhardt R."/>
            <person name="Geider K."/>
        </authorList>
    </citation>
    <scope>NUCLEOTIDE SEQUENCE [LARGE SCALE GENOMIC DNA]</scope>
    <source>
        <strain>DSM 17950 / CFBP 7177 / CIP 109463 / NCPPB 4357 / Et1/99</strain>
    </source>
</reference>